<sequence>MRVFYDKDCDLSIIQGKKVAIIGYGSQGHAHACNLKDSGVDVTVGLRSGSATVAKAEAHGLKVADVKTAVAAADVVMILTPDEFQGRLYKEEIEPNLKKGATLAFAHGFSIHYNQVVPRADLDVIMIAPKAPGHTVRSEFVKGGGIPDLIAIYQDASGNAKNVALSYACGVGGGRTGIIETTFKDETETDLFGEQAVLCGGCVELVKAGFETLVEAGYAPEMAYFECLHELKLIVDLMYEGGIANMNYSISNNAEYGEYVTGPEVINAESRAAMRNALKRIQDGEYAKMFITEGAANYPSMTAYRRNNAAHPIEQIGEKLRAMMPWIAANKIVDKSKN</sequence>
<evidence type="ECO:0000255" key="1">
    <source>
        <dbReference type="HAMAP-Rule" id="MF_00435"/>
    </source>
</evidence>
<evidence type="ECO:0000255" key="2">
    <source>
        <dbReference type="PROSITE-ProRule" id="PRU01197"/>
    </source>
</evidence>
<evidence type="ECO:0000255" key="3">
    <source>
        <dbReference type="PROSITE-ProRule" id="PRU01198"/>
    </source>
</evidence>
<proteinExistence type="inferred from homology"/>
<accession>Q02FX9</accession>
<protein>
    <recommendedName>
        <fullName evidence="1">Ketol-acid reductoisomerase (NADP(+))</fullName>
        <shortName evidence="1">KARI</shortName>
        <ecNumber evidence="1">1.1.1.86</ecNumber>
    </recommendedName>
    <alternativeName>
        <fullName evidence="1">Acetohydroxy-acid isomeroreductase</fullName>
        <shortName evidence="1">AHIR</shortName>
    </alternativeName>
    <alternativeName>
        <fullName evidence="1">Alpha-keto-beta-hydroxylacyl reductoisomerase</fullName>
    </alternativeName>
    <alternativeName>
        <fullName evidence="1">Ketol-acid reductoisomerase type 1</fullName>
    </alternativeName>
    <alternativeName>
        <fullName evidence="1">Ketol-acid reductoisomerase type I</fullName>
    </alternativeName>
</protein>
<feature type="chain" id="PRO_1000050559" description="Ketol-acid reductoisomerase (NADP(+))">
    <location>
        <begin position="1"/>
        <end position="338"/>
    </location>
</feature>
<feature type="domain" description="KARI N-terminal Rossmann" evidence="2">
    <location>
        <begin position="1"/>
        <end position="181"/>
    </location>
</feature>
<feature type="domain" description="KARI C-terminal knotted" evidence="3">
    <location>
        <begin position="182"/>
        <end position="327"/>
    </location>
</feature>
<feature type="active site" evidence="1">
    <location>
        <position position="107"/>
    </location>
</feature>
<feature type="binding site" evidence="1">
    <location>
        <begin position="24"/>
        <end position="27"/>
    </location>
    <ligand>
        <name>NADP(+)</name>
        <dbReference type="ChEBI" id="CHEBI:58349"/>
    </ligand>
</feature>
<feature type="binding site" evidence="1">
    <location>
        <position position="47"/>
    </location>
    <ligand>
        <name>NADP(+)</name>
        <dbReference type="ChEBI" id="CHEBI:58349"/>
    </ligand>
</feature>
<feature type="binding site" evidence="1">
    <location>
        <position position="50"/>
    </location>
    <ligand>
        <name>NADP(+)</name>
        <dbReference type="ChEBI" id="CHEBI:58349"/>
    </ligand>
</feature>
<feature type="binding site" evidence="1">
    <location>
        <position position="52"/>
    </location>
    <ligand>
        <name>NADP(+)</name>
        <dbReference type="ChEBI" id="CHEBI:58349"/>
    </ligand>
</feature>
<feature type="binding site" evidence="1">
    <location>
        <begin position="82"/>
        <end position="85"/>
    </location>
    <ligand>
        <name>NADP(+)</name>
        <dbReference type="ChEBI" id="CHEBI:58349"/>
    </ligand>
</feature>
<feature type="binding site" evidence="1">
    <location>
        <position position="133"/>
    </location>
    <ligand>
        <name>NADP(+)</name>
        <dbReference type="ChEBI" id="CHEBI:58349"/>
    </ligand>
</feature>
<feature type="binding site" evidence="1">
    <location>
        <position position="190"/>
    </location>
    <ligand>
        <name>Mg(2+)</name>
        <dbReference type="ChEBI" id="CHEBI:18420"/>
        <label>1</label>
    </ligand>
</feature>
<feature type="binding site" evidence="1">
    <location>
        <position position="190"/>
    </location>
    <ligand>
        <name>Mg(2+)</name>
        <dbReference type="ChEBI" id="CHEBI:18420"/>
        <label>2</label>
    </ligand>
</feature>
<feature type="binding site" evidence="1">
    <location>
        <position position="194"/>
    </location>
    <ligand>
        <name>Mg(2+)</name>
        <dbReference type="ChEBI" id="CHEBI:18420"/>
        <label>1</label>
    </ligand>
</feature>
<feature type="binding site" evidence="1">
    <location>
        <position position="226"/>
    </location>
    <ligand>
        <name>Mg(2+)</name>
        <dbReference type="ChEBI" id="CHEBI:18420"/>
        <label>2</label>
    </ligand>
</feature>
<feature type="binding site" evidence="1">
    <location>
        <position position="230"/>
    </location>
    <ligand>
        <name>Mg(2+)</name>
        <dbReference type="ChEBI" id="CHEBI:18420"/>
        <label>2</label>
    </ligand>
</feature>
<feature type="binding site" evidence="1">
    <location>
        <position position="251"/>
    </location>
    <ligand>
        <name>substrate</name>
    </ligand>
</feature>
<name>ILVC_PSEAB</name>
<reference key="1">
    <citation type="journal article" date="2006" name="Genome Biol.">
        <title>Genomic analysis reveals that Pseudomonas aeruginosa virulence is combinatorial.</title>
        <authorList>
            <person name="Lee D.G."/>
            <person name="Urbach J.M."/>
            <person name="Wu G."/>
            <person name="Liberati N.T."/>
            <person name="Feinbaum R.L."/>
            <person name="Miyata S."/>
            <person name="Diggins L.T."/>
            <person name="He J."/>
            <person name="Saucier M."/>
            <person name="Deziel E."/>
            <person name="Friedman L."/>
            <person name="Li L."/>
            <person name="Grills G."/>
            <person name="Montgomery K."/>
            <person name="Kucherlapati R."/>
            <person name="Rahme L.G."/>
            <person name="Ausubel F.M."/>
        </authorList>
    </citation>
    <scope>NUCLEOTIDE SEQUENCE [LARGE SCALE GENOMIC DNA]</scope>
    <source>
        <strain>UCBPP-PA14</strain>
    </source>
</reference>
<organism>
    <name type="scientific">Pseudomonas aeruginosa (strain UCBPP-PA14)</name>
    <dbReference type="NCBI Taxonomy" id="208963"/>
    <lineage>
        <taxon>Bacteria</taxon>
        <taxon>Pseudomonadati</taxon>
        <taxon>Pseudomonadota</taxon>
        <taxon>Gammaproteobacteria</taxon>
        <taxon>Pseudomonadales</taxon>
        <taxon>Pseudomonadaceae</taxon>
        <taxon>Pseudomonas</taxon>
    </lineage>
</organism>
<keyword id="KW-0028">Amino-acid biosynthesis</keyword>
<keyword id="KW-0100">Branched-chain amino acid biosynthesis</keyword>
<keyword id="KW-0460">Magnesium</keyword>
<keyword id="KW-0479">Metal-binding</keyword>
<keyword id="KW-0521">NADP</keyword>
<keyword id="KW-0560">Oxidoreductase</keyword>
<gene>
    <name evidence="1" type="primary">ilvC</name>
    <name type="ordered locus">PA14_62130</name>
</gene>
<dbReference type="EC" id="1.1.1.86" evidence="1"/>
<dbReference type="EMBL" id="CP000438">
    <property type="protein sequence ID" value="ABJ14076.1"/>
    <property type="molecule type" value="Genomic_DNA"/>
</dbReference>
<dbReference type="RefSeq" id="WP_003095066.1">
    <property type="nucleotide sequence ID" value="NZ_CP034244.1"/>
</dbReference>
<dbReference type="SMR" id="Q02FX9"/>
<dbReference type="KEGG" id="pau:PA14_62130"/>
<dbReference type="PseudoCAP" id="PA14_62130"/>
<dbReference type="HOGENOM" id="CLU_033821_0_1_6"/>
<dbReference type="BioCyc" id="PAER208963:G1G74-5255-MONOMER"/>
<dbReference type="UniPathway" id="UPA00047">
    <property type="reaction ID" value="UER00056"/>
</dbReference>
<dbReference type="UniPathway" id="UPA00049">
    <property type="reaction ID" value="UER00060"/>
</dbReference>
<dbReference type="Proteomes" id="UP000000653">
    <property type="component" value="Chromosome"/>
</dbReference>
<dbReference type="GO" id="GO:0005829">
    <property type="term" value="C:cytosol"/>
    <property type="evidence" value="ECO:0007669"/>
    <property type="project" value="TreeGrafter"/>
</dbReference>
<dbReference type="GO" id="GO:0004455">
    <property type="term" value="F:ketol-acid reductoisomerase activity"/>
    <property type="evidence" value="ECO:0007669"/>
    <property type="project" value="UniProtKB-UniRule"/>
</dbReference>
<dbReference type="GO" id="GO:0000287">
    <property type="term" value="F:magnesium ion binding"/>
    <property type="evidence" value="ECO:0007669"/>
    <property type="project" value="UniProtKB-UniRule"/>
</dbReference>
<dbReference type="GO" id="GO:0050661">
    <property type="term" value="F:NADP binding"/>
    <property type="evidence" value="ECO:0007669"/>
    <property type="project" value="InterPro"/>
</dbReference>
<dbReference type="GO" id="GO:0009097">
    <property type="term" value="P:isoleucine biosynthetic process"/>
    <property type="evidence" value="ECO:0007669"/>
    <property type="project" value="UniProtKB-UniRule"/>
</dbReference>
<dbReference type="GO" id="GO:0009099">
    <property type="term" value="P:L-valine biosynthetic process"/>
    <property type="evidence" value="ECO:0007669"/>
    <property type="project" value="UniProtKB-UniRule"/>
</dbReference>
<dbReference type="FunFam" id="3.40.50.720:FF:000023">
    <property type="entry name" value="Ketol-acid reductoisomerase (NADP(+))"/>
    <property type="match status" value="1"/>
</dbReference>
<dbReference type="Gene3D" id="6.10.240.10">
    <property type="match status" value="1"/>
</dbReference>
<dbReference type="Gene3D" id="3.40.50.720">
    <property type="entry name" value="NAD(P)-binding Rossmann-like Domain"/>
    <property type="match status" value="1"/>
</dbReference>
<dbReference type="HAMAP" id="MF_00435">
    <property type="entry name" value="IlvC"/>
    <property type="match status" value="1"/>
</dbReference>
<dbReference type="InterPro" id="IPR008927">
    <property type="entry name" value="6-PGluconate_DH-like_C_sf"/>
</dbReference>
<dbReference type="InterPro" id="IPR013023">
    <property type="entry name" value="KARI"/>
</dbReference>
<dbReference type="InterPro" id="IPR000506">
    <property type="entry name" value="KARI_C"/>
</dbReference>
<dbReference type="InterPro" id="IPR013116">
    <property type="entry name" value="KARI_N"/>
</dbReference>
<dbReference type="InterPro" id="IPR014359">
    <property type="entry name" value="KARI_prok"/>
</dbReference>
<dbReference type="InterPro" id="IPR036291">
    <property type="entry name" value="NAD(P)-bd_dom_sf"/>
</dbReference>
<dbReference type="NCBIfam" id="TIGR00465">
    <property type="entry name" value="ilvC"/>
    <property type="match status" value="1"/>
</dbReference>
<dbReference type="NCBIfam" id="NF004017">
    <property type="entry name" value="PRK05479.1"/>
    <property type="match status" value="1"/>
</dbReference>
<dbReference type="NCBIfam" id="NF009940">
    <property type="entry name" value="PRK13403.1"/>
    <property type="match status" value="1"/>
</dbReference>
<dbReference type="PANTHER" id="PTHR21371">
    <property type="entry name" value="KETOL-ACID REDUCTOISOMERASE, MITOCHONDRIAL"/>
    <property type="match status" value="1"/>
</dbReference>
<dbReference type="PANTHER" id="PTHR21371:SF1">
    <property type="entry name" value="KETOL-ACID REDUCTOISOMERASE, MITOCHONDRIAL"/>
    <property type="match status" value="1"/>
</dbReference>
<dbReference type="Pfam" id="PF01450">
    <property type="entry name" value="KARI_C"/>
    <property type="match status" value="1"/>
</dbReference>
<dbReference type="Pfam" id="PF07991">
    <property type="entry name" value="KARI_N"/>
    <property type="match status" value="1"/>
</dbReference>
<dbReference type="PIRSF" id="PIRSF000116">
    <property type="entry name" value="IlvC_gammaproteo"/>
    <property type="match status" value="1"/>
</dbReference>
<dbReference type="SUPFAM" id="SSF48179">
    <property type="entry name" value="6-phosphogluconate dehydrogenase C-terminal domain-like"/>
    <property type="match status" value="1"/>
</dbReference>
<dbReference type="SUPFAM" id="SSF51735">
    <property type="entry name" value="NAD(P)-binding Rossmann-fold domains"/>
    <property type="match status" value="1"/>
</dbReference>
<dbReference type="PROSITE" id="PS51851">
    <property type="entry name" value="KARI_C"/>
    <property type="match status" value="1"/>
</dbReference>
<dbReference type="PROSITE" id="PS51850">
    <property type="entry name" value="KARI_N"/>
    <property type="match status" value="1"/>
</dbReference>
<comment type="function">
    <text evidence="1">Involved in the biosynthesis of branched-chain amino acids (BCAA). Catalyzes an alkyl-migration followed by a ketol-acid reduction of (S)-2-acetolactate (S2AL) to yield (R)-2,3-dihydroxy-isovalerate. In the isomerase reaction, S2AL is rearranged via a Mg-dependent methyl migration to produce 3-hydroxy-3-methyl-2-ketobutyrate (HMKB). In the reductase reaction, this 2-ketoacid undergoes a metal-dependent reduction by NADPH to yield (R)-2,3-dihydroxy-isovalerate.</text>
</comment>
<comment type="catalytic activity">
    <reaction evidence="1">
        <text>(2R)-2,3-dihydroxy-3-methylbutanoate + NADP(+) = (2S)-2-acetolactate + NADPH + H(+)</text>
        <dbReference type="Rhea" id="RHEA:22068"/>
        <dbReference type="ChEBI" id="CHEBI:15378"/>
        <dbReference type="ChEBI" id="CHEBI:49072"/>
        <dbReference type="ChEBI" id="CHEBI:57783"/>
        <dbReference type="ChEBI" id="CHEBI:58349"/>
        <dbReference type="ChEBI" id="CHEBI:58476"/>
        <dbReference type="EC" id="1.1.1.86"/>
    </reaction>
</comment>
<comment type="catalytic activity">
    <reaction evidence="1">
        <text>(2R,3R)-2,3-dihydroxy-3-methylpentanoate + NADP(+) = (S)-2-ethyl-2-hydroxy-3-oxobutanoate + NADPH + H(+)</text>
        <dbReference type="Rhea" id="RHEA:13493"/>
        <dbReference type="ChEBI" id="CHEBI:15378"/>
        <dbReference type="ChEBI" id="CHEBI:49256"/>
        <dbReference type="ChEBI" id="CHEBI:49258"/>
        <dbReference type="ChEBI" id="CHEBI:57783"/>
        <dbReference type="ChEBI" id="CHEBI:58349"/>
        <dbReference type="EC" id="1.1.1.86"/>
    </reaction>
</comment>
<comment type="cofactor">
    <cofactor evidence="1">
        <name>Mg(2+)</name>
        <dbReference type="ChEBI" id="CHEBI:18420"/>
    </cofactor>
    <text evidence="1">Binds 2 magnesium ions per subunit.</text>
</comment>
<comment type="pathway">
    <text evidence="1">Amino-acid biosynthesis; L-isoleucine biosynthesis; L-isoleucine from 2-oxobutanoate: step 2/4.</text>
</comment>
<comment type="pathway">
    <text evidence="1">Amino-acid biosynthesis; L-valine biosynthesis; L-valine from pyruvate: step 2/4.</text>
</comment>
<comment type="similarity">
    <text evidence="1">Belongs to the ketol-acid reductoisomerase family.</text>
</comment>